<sequence length="208" mass="23353">MAKVLYITAHPFNELVSNSMAAGKAFIETYQQQHPDDEVKHIDLFETYIPVIDKDVLTGWGKMSNGETLTDDEQMKVSRLSDILEEFLSADKYVFVTPMWNLSFPPVVKAYIDAISIAGKTFKYSAEGPQGLLTDKKVLHIQSRGGYYTEGPAADFEMGDRYLRTIMTFLGVPSYETIIIEGHNAEPHKTEEIKATSINNAEKLATTF</sequence>
<dbReference type="EC" id="1.6.5.-" evidence="1"/>
<dbReference type="EC" id="1.7.1.17" evidence="1"/>
<dbReference type="EMBL" id="BA000018">
    <property type="protein sequence ID" value="BAB41426.1"/>
    <property type="molecule type" value="Genomic_DNA"/>
</dbReference>
<dbReference type="PIR" id="G89783">
    <property type="entry name" value="G89783"/>
</dbReference>
<dbReference type="RefSeq" id="WP_001151451.1">
    <property type="nucleotide sequence ID" value="NC_002745.2"/>
</dbReference>
<dbReference type="SMR" id="Q99X11"/>
<dbReference type="EnsemblBacteria" id="BAB41426">
    <property type="protein sequence ID" value="BAB41426"/>
    <property type="gene ID" value="BAB41426"/>
</dbReference>
<dbReference type="KEGG" id="sau:SA0204"/>
<dbReference type="HOGENOM" id="CLU_088964_3_1_9"/>
<dbReference type="GO" id="GO:0009055">
    <property type="term" value="F:electron transfer activity"/>
    <property type="evidence" value="ECO:0007669"/>
    <property type="project" value="UniProtKB-UniRule"/>
</dbReference>
<dbReference type="GO" id="GO:0010181">
    <property type="term" value="F:FMN binding"/>
    <property type="evidence" value="ECO:0007669"/>
    <property type="project" value="UniProtKB-UniRule"/>
</dbReference>
<dbReference type="GO" id="GO:0016652">
    <property type="term" value="F:oxidoreductase activity, acting on NAD(P)H as acceptor"/>
    <property type="evidence" value="ECO:0007669"/>
    <property type="project" value="UniProtKB-UniRule"/>
</dbReference>
<dbReference type="GO" id="GO:0016655">
    <property type="term" value="F:oxidoreductase activity, acting on NAD(P)H, quinone or similar compound as acceptor"/>
    <property type="evidence" value="ECO:0007669"/>
    <property type="project" value="InterPro"/>
</dbReference>
<dbReference type="Gene3D" id="3.40.50.360">
    <property type="match status" value="1"/>
</dbReference>
<dbReference type="HAMAP" id="MF_01216">
    <property type="entry name" value="Azoreductase_type1"/>
    <property type="match status" value="1"/>
</dbReference>
<dbReference type="InterPro" id="IPR003680">
    <property type="entry name" value="Flavodoxin_fold"/>
</dbReference>
<dbReference type="InterPro" id="IPR029039">
    <property type="entry name" value="Flavoprotein-like_sf"/>
</dbReference>
<dbReference type="InterPro" id="IPR050104">
    <property type="entry name" value="FMN-dep_NADH:Q_OxRdtase_AzoR1"/>
</dbReference>
<dbReference type="InterPro" id="IPR023048">
    <property type="entry name" value="NADH:quinone_OxRdtase_FMN_depd"/>
</dbReference>
<dbReference type="NCBIfam" id="NF010075">
    <property type="entry name" value="PRK13556.1"/>
    <property type="match status" value="1"/>
</dbReference>
<dbReference type="PANTHER" id="PTHR43741">
    <property type="entry name" value="FMN-DEPENDENT NADH-AZOREDUCTASE 1"/>
    <property type="match status" value="1"/>
</dbReference>
<dbReference type="PANTHER" id="PTHR43741:SF7">
    <property type="entry name" value="FMN-DEPENDENT NADH:QUINONE OXIDOREDUCTASE"/>
    <property type="match status" value="1"/>
</dbReference>
<dbReference type="Pfam" id="PF02525">
    <property type="entry name" value="Flavodoxin_2"/>
    <property type="match status" value="1"/>
</dbReference>
<dbReference type="SUPFAM" id="SSF52218">
    <property type="entry name" value="Flavoproteins"/>
    <property type="match status" value="1"/>
</dbReference>
<name>AZOR_STAAN</name>
<keyword id="KW-0285">Flavoprotein</keyword>
<keyword id="KW-0288">FMN</keyword>
<keyword id="KW-0520">NAD</keyword>
<keyword id="KW-0560">Oxidoreductase</keyword>
<accession>Q99X11</accession>
<reference key="1">
    <citation type="journal article" date="2001" name="Lancet">
        <title>Whole genome sequencing of meticillin-resistant Staphylococcus aureus.</title>
        <authorList>
            <person name="Kuroda M."/>
            <person name="Ohta T."/>
            <person name="Uchiyama I."/>
            <person name="Baba T."/>
            <person name="Yuzawa H."/>
            <person name="Kobayashi I."/>
            <person name="Cui L."/>
            <person name="Oguchi A."/>
            <person name="Aoki K."/>
            <person name="Nagai Y."/>
            <person name="Lian J.-Q."/>
            <person name="Ito T."/>
            <person name="Kanamori M."/>
            <person name="Matsumaru H."/>
            <person name="Maruyama A."/>
            <person name="Murakami H."/>
            <person name="Hosoyama A."/>
            <person name="Mizutani-Ui Y."/>
            <person name="Takahashi N.K."/>
            <person name="Sawano T."/>
            <person name="Inoue R."/>
            <person name="Kaito C."/>
            <person name="Sekimizu K."/>
            <person name="Hirakawa H."/>
            <person name="Kuhara S."/>
            <person name="Goto S."/>
            <person name="Yabuzaki J."/>
            <person name="Kanehisa M."/>
            <person name="Yamashita A."/>
            <person name="Oshima K."/>
            <person name="Furuya K."/>
            <person name="Yoshino C."/>
            <person name="Shiba T."/>
            <person name="Hattori M."/>
            <person name="Ogasawara N."/>
            <person name="Hayashi H."/>
            <person name="Hiramatsu K."/>
        </authorList>
    </citation>
    <scope>NUCLEOTIDE SEQUENCE [LARGE SCALE GENOMIC DNA]</scope>
    <source>
        <strain>N315</strain>
    </source>
</reference>
<reference key="2">
    <citation type="submission" date="2007-10" db="UniProtKB">
        <title>Shotgun proteomic analysis of total and membrane protein extracts of S. aureus strain N315.</title>
        <authorList>
            <person name="Vaezzadeh A.R."/>
            <person name="Deshusses J."/>
            <person name="Lescuyer P."/>
            <person name="Hochstrasser D.F."/>
        </authorList>
    </citation>
    <scope>IDENTIFICATION BY MASS SPECTROMETRY [LARGE SCALE ANALYSIS]</scope>
    <source>
        <strain>N315</strain>
    </source>
</reference>
<comment type="function">
    <text evidence="1">Quinone reductase that provides resistance to thiol-specific stress caused by electrophilic quinones.</text>
</comment>
<comment type="function">
    <text evidence="1">Also exhibits azoreductase activity. Catalyzes the reductive cleavage of the azo bond in aromatic azo compounds to the corresponding amines.</text>
</comment>
<comment type="catalytic activity">
    <reaction evidence="1">
        <text>2 a quinone + NADH + H(+) = 2 a 1,4-benzosemiquinone + NAD(+)</text>
        <dbReference type="Rhea" id="RHEA:65952"/>
        <dbReference type="ChEBI" id="CHEBI:15378"/>
        <dbReference type="ChEBI" id="CHEBI:57540"/>
        <dbReference type="ChEBI" id="CHEBI:57945"/>
        <dbReference type="ChEBI" id="CHEBI:132124"/>
        <dbReference type="ChEBI" id="CHEBI:134225"/>
    </reaction>
</comment>
<comment type="catalytic activity">
    <reaction evidence="1">
        <text>N,N-dimethyl-1,4-phenylenediamine + anthranilate + 2 NAD(+) = 2-(4-dimethylaminophenyl)diazenylbenzoate + 2 NADH + 2 H(+)</text>
        <dbReference type="Rhea" id="RHEA:55872"/>
        <dbReference type="ChEBI" id="CHEBI:15378"/>
        <dbReference type="ChEBI" id="CHEBI:15783"/>
        <dbReference type="ChEBI" id="CHEBI:16567"/>
        <dbReference type="ChEBI" id="CHEBI:57540"/>
        <dbReference type="ChEBI" id="CHEBI:57945"/>
        <dbReference type="ChEBI" id="CHEBI:71579"/>
        <dbReference type="EC" id="1.7.1.17"/>
    </reaction>
</comment>
<comment type="cofactor">
    <cofactor evidence="1">
        <name>FMN</name>
        <dbReference type="ChEBI" id="CHEBI:58210"/>
    </cofactor>
    <text evidence="1">Binds 1 FMN per subunit.</text>
</comment>
<comment type="subunit">
    <text evidence="1">Homodimer.</text>
</comment>
<comment type="similarity">
    <text evidence="1">Belongs to the azoreductase type 1 family.</text>
</comment>
<gene>
    <name evidence="1" type="primary">azoR</name>
    <name type="ordered locus">SA0204</name>
</gene>
<proteinExistence type="evidence at protein level"/>
<organism>
    <name type="scientific">Staphylococcus aureus (strain N315)</name>
    <dbReference type="NCBI Taxonomy" id="158879"/>
    <lineage>
        <taxon>Bacteria</taxon>
        <taxon>Bacillati</taxon>
        <taxon>Bacillota</taxon>
        <taxon>Bacilli</taxon>
        <taxon>Bacillales</taxon>
        <taxon>Staphylococcaceae</taxon>
        <taxon>Staphylococcus</taxon>
    </lineage>
</organism>
<feature type="chain" id="PRO_0000166355" description="FMN-dependent NADH:quinone oxidoreductase">
    <location>
        <begin position="1"/>
        <end position="208"/>
    </location>
</feature>
<feature type="binding site" evidence="1">
    <location>
        <begin position="17"/>
        <end position="19"/>
    </location>
    <ligand>
        <name>FMN</name>
        <dbReference type="ChEBI" id="CHEBI:58210"/>
    </ligand>
</feature>
<feature type="binding site" evidence="1">
    <location>
        <begin position="99"/>
        <end position="102"/>
    </location>
    <ligand>
        <name>FMN</name>
        <dbReference type="ChEBI" id="CHEBI:58210"/>
    </ligand>
</feature>
<feature type="binding site" evidence="1">
    <location>
        <begin position="143"/>
        <end position="146"/>
    </location>
    <ligand>
        <name>FMN</name>
        <dbReference type="ChEBI" id="CHEBI:58210"/>
    </ligand>
</feature>
<protein>
    <recommendedName>
        <fullName evidence="1">FMN-dependent NADH:quinone oxidoreductase</fullName>
        <ecNumber evidence="1">1.6.5.-</ecNumber>
    </recommendedName>
    <alternativeName>
        <fullName evidence="1">Azo-dye reductase</fullName>
    </alternativeName>
    <alternativeName>
        <fullName evidence="1">FMN-dependent NADH-azo compound oxidoreductase</fullName>
    </alternativeName>
    <alternativeName>
        <fullName evidence="1">FMN-dependent NADH-azoreductase</fullName>
        <ecNumber evidence="1">1.7.1.17</ecNumber>
    </alternativeName>
</protein>
<evidence type="ECO:0000255" key="1">
    <source>
        <dbReference type="HAMAP-Rule" id="MF_01216"/>
    </source>
</evidence>